<sequence length="308" mass="35414">MKFLWAALVVTLLAGCRADVEEEVKLGQEPDRWQAKQPWEQALGRFWEYLRWVQTLSNKVKEELLNSQVTEELKLLIEETMKEVKAYKEELEKQVGPIAQETQARLSKELQAAQARLESDMEDVRTRLAQYRSEAQAALGQNTDDLQGRLASHLRKLRKRLLRDAEDLQKRLAVYQAGTREAAERGVSAVHERLGPLMMEGPLQAIPPSQQLRERAEAWGQKVRGRLESVGSQARDRLDDMRDQMEELKAKVEEQASQVRLQAEAFQTRLKSWFEPLVQDMQRQWASLVEKVQSTLGISPSTKPSKTK</sequence>
<accession>A0A6P3R0Z0</accession>
<accession>P0DUJ1</accession>
<proteinExistence type="inferred from homology"/>
<comment type="function">
    <text evidence="1">APOE is an apolipoprotein, a protein associating with lipid particles, that mainly functions in lipoprotein-mediated lipid transport between organs via the plasma and interstitial fluids. APOE is a core component of plasma lipoproteins and is involved in their production, conversion and clearance. Apolipoproteins are amphipathic molecules that interact both with lipids of the lipoprotein particle core and the aqueous environment of the plasma. As such, APOE associates with chylomicrons, chylomicron remnants, very low density lipoproteins (VLDL) and intermediate density lipoproteins (IDL) but shows a preferential binding to high-density lipoproteins (HDL). It also binds a wide range of cellular receptors including the LDL receptor/LDLR and the very low-density lipoprotein receptor/VLDLR that mediate the cellular uptake of the APOE-containing lipoprotein particles. Finally, APOE also has a heparin-binding activity and binds heparan-sulfate proteoglycans on the surface of cells, a property that supports the capture and the receptor-mediated uptake of APOE-containing lipoproteins by cells.</text>
</comment>
<comment type="subunit">
    <text evidence="1">Homotetramer. May interact with ABCA1; functionally associated with ABCA1 in the biogenesis of HDLs. May interact with APP/A4 amyloid-beta peptide; the interaction is extremely stable in vitro but its physiological significance is unclear. May interact with MAPT. May interact with MAP2. In the cerebrospinal fluid, interacts with secreted SORL1. Interacts with PMEL; this allows the loading of PMEL luminal fragment on ILVs to induce fibril nucleation.</text>
</comment>
<comment type="subcellular location">
    <subcellularLocation>
        <location evidence="1">Secreted</location>
    </subcellularLocation>
    <subcellularLocation>
        <location evidence="1">Secreted</location>
        <location evidence="1">Extracellular space</location>
    </subcellularLocation>
    <subcellularLocation>
        <location evidence="1">Secreted</location>
        <location evidence="1">Extracellular space</location>
        <location evidence="1">Extracellular matrix</location>
    </subcellularLocation>
    <subcellularLocation>
        <location evidence="1">Extracellular vesicle</location>
    </subcellularLocation>
    <subcellularLocation>
        <location evidence="1">Endosome</location>
        <location evidence="1">Multivesicular body</location>
    </subcellularLocation>
    <text evidence="1">In the plasma, APOE is associated with chylomicrons, chylomicrons remnants, VLDL, LDL and HDL lipoproteins. Lipid poor oligomeric APOE is associated with the extracellular matrix in a calcium- and heparan-sulfate proteoglycans-dependent manner. Lipidation induces the release from the extracellular matrix. Colocalizes with CD63 and PMEL at exosomes and in intraluminal vesicles within multivesicular endosomes.</text>
</comment>
<comment type="PTM">
    <text evidence="1">APOE exists as multiple glycosylated and sialylated glycoforms within cells and in plasma. The extent of glycosylation and sialylation are tissue and context specific.</text>
</comment>
<comment type="PTM">
    <text evidence="1">Glycated in plasma VLDL.</text>
</comment>
<comment type="PTM">
    <text evidence="1">Phosphorylated by FAM20C in the extracellular medium.</text>
</comment>
<comment type="similarity">
    <text evidence="3">Belongs to the apolipoprotein A1/A4/E family.</text>
</comment>
<feature type="signal peptide" evidence="2">
    <location>
        <begin position="1"/>
        <end position="18"/>
    </location>
</feature>
<feature type="chain" id="PRO_5027983756" description="Apolipoprotein E">
    <location>
        <begin position="19"/>
        <end position="308"/>
    </location>
</feature>
<feature type="repeat" description="1">
    <location>
        <begin position="75"/>
        <end position="96"/>
    </location>
</feature>
<feature type="repeat" description="2">
    <location>
        <begin position="97"/>
        <end position="118"/>
    </location>
</feature>
<feature type="repeat" description="3">
    <location>
        <begin position="119"/>
        <end position="140"/>
    </location>
</feature>
<feature type="repeat" description="4">
    <location>
        <begin position="141"/>
        <end position="162"/>
    </location>
</feature>
<feature type="repeat" description="5">
    <location>
        <begin position="163"/>
        <end position="184"/>
    </location>
</feature>
<feature type="repeat" description="6">
    <location>
        <begin position="185"/>
        <end position="206"/>
    </location>
</feature>
<feature type="repeat" description="7">
    <location>
        <begin position="207"/>
        <end position="224"/>
    </location>
</feature>
<feature type="repeat" description="8">
    <location>
        <begin position="225"/>
        <end position="246"/>
    </location>
</feature>
<feature type="region of interest" description="8 X 22 AA approximate tandem repeats">
    <location>
        <begin position="75"/>
        <end position="246"/>
    </location>
</feature>
<feature type="region of interest" description="LDL and other lipoprotein receptors binding" evidence="1">
    <location>
        <begin position="153"/>
        <end position="163"/>
    </location>
</feature>
<feature type="region of interest" description="Lipid-binding and lipoprotein association" evidence="1">
    <location>
        <begin position="205"/>
        <end position="281"/>
    </location>
</feature>
<feature type="region of interest" description="Homooligomerization" evidence="1">
    <location>
        <begin position="257"/>
        <end position="308"/>
    </location>
</feature>
<feature type="region of interest" description="Specificity for association with VLDL" evidence="1">
    <location>
        <begin position="269"/>
        <end position="281"/>
    </location>
</feature>
<feature type="binding site" evidence="1">
    <location>
        <begin position="157"/>
        <end position="160"/>
    </location>
    <ligand>
        <name>heparin</name>
        <dbReference type="ChEBI" id="CHEBI:28304"/>
    </ligand>
</feature>
<feature type="binding site" evidence="1">
    <location>
        <begin position="220"/>
        <end position="227"/>
    </location>
    <ligand>
        <name>heparin</name>
        <dbReference type="ChEBI" id="CHEBI:28304"/>
    </ligand>
</feature>
<keyword id="KW-0162">Chylomicron</keyword>
<keyword id="KW-0967">Endosome</keyword>
<keyword id="KW-0272">Extracellular matrix</keyword>
<keyword id="KW-0325">Glycoprotein</keyword>
<keyword id="KW-0345">HDL</keyword>
<keyword id="KW-0358">Heparin-binding</keyword>
<keyword id="KW-0445">Lipid transport</keyword>
<keyword id="KW-0446">Lipid-binding</keyword>
<keyword id="KW-0558">Oxidation</keyword>
<keyword id="KW-0597">Phosphoprotein</keyword>
<keyword id="KW-1185">Reference proteome</keyword>
<keyword id="KW-0677">Repeat</keyword>
<keyword id="KW-0964">Secreted</keyword>
<keyword id="KW-0732">Signal</keyword>
<keyword id="KW-0813">Transport</keyword>
<keyword id="KW-0850">VLDL</keyword>
<organism>
    <name type="scientific">Pteropus vampyrus</name>
    <name type="common">Large flying fox</name>
    <dbReference type="NCBI Taxonomy" id="132908"/>
    <lineage>
        <taxon>Eukaryota</taxon>
        <taxon>Metazoa</taxon>
        <taxon>Chordata</taxon>
        <taxon>Craniata</taxon>
        <taxon>Vertebrata</taxon>
        <taxon>Euteleostomi</taxon>
        <taxon>Mammalia</taxon>
        <taxon>Eutheria</taxon>
        <taxon>Laurasiatheria</taxon>
        <taxon>Chiroptera</taxon>
        <taxon>Yinpterochiroptera</taxon>
        <taxon>Pteropodoidea</taxon>
        <taxon>Pteropodidae</taxon>
        <taxon>Pteropodinae</taxon>
        <taxon>Pteropus</taxon>
    </lineage>
</organism>
<reference key="1">
    <citation type="submission" date="2014-10" db="EMBL/GenBank/DDBJ databases">
        <authorList>
            <person name="Liu Y."/>
            <person name="Qu J."/>
            <person name="Gnerre S."/>
            <person name="Cree A."/>
            <person name="Dinh H."/>
            <person name="Dugan S."/>
            <person name="Jhangiani S."/>
            <person name="Lee S.L."/>
            <person name="Nazareth L."/>
            <person name="Okwuonu G."/>
            <person name="Santibanez J."/>
            <person name="Anosike U."/>
            <person name="Bandaranaike D."/>
            <person name="Bickham C."/>
            <person name="Chao H."/>
            <person name="Chavez A."/>
            <person name="Dahdouli M."/>
            <person name="Dao M."/>
            <person name="Davila M."/>
            <person name="Davy-Carroll L."/>
            <person name="Denson S."/>
            <person name="Falls T."/>
            <person name="Fernandez S."/>
            <person name="Fernando P."/>
            <person name="Francis C."/>
            <person name="Ganer J."/>
            <person name="Garcia R. III"/>
            <person name="Gross S."/>
            <person name="Hale W."/>
            <person name="Heiman D."/>
            <person name="Hollins B."/>
            <person name="Javaid M."/>
            <person name="Johnson B."/>
            <person name="Jones J."/>
            <person name="Joshi V."/>
            <person name="Kalu J."/>
            <person name="Kisamo H."/>
            <person name="Largo L."/>
            <person name="Le T."/>
            <person name="Leal B."/>
            <person name="Legall F. III"/>
            <person name="Lemon S."/>
            <person name="Lewis L."/>
            <person name="Lopez J."/>
            <person name="Martinez E."/>
            <person name="Matakis S."/>
            <person name="Mercado I."/>
            <person name="Munidasa M."/>
            <person name="Narasimhan A."/>
            <person name="Ng B."/>
            <person name="Ngo D."/>
            <person name="Nguyen L."/>
            <person name="Obregon M."/>
            <person name="Ongeri F."/>
            <person name="Onwere C."/>
            <person name="Osuji N."/>
            <person name="Parra A."/>
            <person name="Perez A."/>
            <person name="Perez Y."/>
            <person name="Pham C."/>
            <person name="Primus E."/>
            <person name="Puazo R."/>
            <person name="Qi S."/>
            <person name="Qu C."/>
            <person name="Quiroz J."/>
            <person name="Raj R."/>
            <person name="Rajbhandari K."/>
            <person name="Ruiz S."/>
            <person name="Schneider B."/>
            <person name="Simmons D."/>
            <person name="Sisson I."/>
            <person name="Skinner E."/>
            <person name="Thornton R."/>
            <person name="Usmani K."/>
            <person name="Walker D."/>
            <person name="White C."/>
            <person name="Williams A."/>
            <person name="Woodworth J."/>
            <person name="Wright R."/>
            <person name="Young S."/>
            <person name="Yun X."/>
            <person name="Han Y."/>
            <person name="Kovar C."/>
            <person name="Reid J.G."/>
            <person name="Weinstock G."/>
            <person name="Doddapaneni H."/>
            <person name="Muzny D.M."/>
            <person name="Worley K.C."/>
            <person name="Gibbs R.A."/>
        </authorList>
    </citation>
    <scope>NUCLEOTIDE SEQUENCE [LARGE SCALE GENOMIC DNA]</scope>
</reference>
<reference key="2">
    <citation type="unpublished observations" date="2021-01">
        <authorList>
            <person name="Puppione D.L."/>
        </authorList>
    </citation>
    <scope>IDENTIFICATION</scope>
</reference>
<evidence type="ECO:0000250" key="1">
    <source>
        <dbReference type="UniProtKB" id="P02649"/>
    </source>
</evidence>
<evidence type="ECO:0000255" key="2"/>
<evidence type="ECO:0000305" key="3"/>
<gene>
    <name type="primary">APOE</name>
</gene>
<dbReference type="EMBL" id="ABRP00000000">
    <property type="status" value="NOT_ANNOTATED_CDS"/>
    <property type="molecule type" value="Genomic_DNA"/>
</dbReference>
<dbReference type="RefSeq" id="XP_011366273.1">
    <property type="nucleotide sequence ID" value="XM_011367971.2"/>
</dbReference>
<dbReference type="SMR" id="A0A6P3R0Z0"/>
<dbReference type="GeneID" id="105297354"/>
<dbReference type="KEGG" id="pvp:105297354"/>
<dbReference type="CTD" id="348"/>
<dbReference type="OrthoDB" id="9048614at2759"/>
<dbReference type="Proteomes" id="UP000515202">
    <property type="component" value="Unplaced"/>
</dbReference>
<dbReference type="GO" id="GO:0042627">
    <property type="term" value="C:chylomicron"/>
    <property type="evidence" value="ECO:0007669"/>
    <property type="project" value="UniProtKB-KW"/>
</dbReference>
<dbReference type="GO" id="GO:0070062">
    <property type="term" value="C:extracellular exosome"/>
    <property type="evidence" value="ECO:0000250"/>
    <property type="project" value="UniProtKB"/>
</dbReference>
<dbReference type="GO" id="GO:0034364">
    <property type="term" value="C:high-density lipoprotein particle"/>
    <property type="evidence" value="ECO:0007669"/>
    <property type="project" value="UniProtKB-KW"/>
</dbReference>
<dbReference type="GO" id="GO:0034362">
    <property type="term" value="C:low-density lipoprotein particle"/>
    <property type="evidence" value="ECO:0007669"/>
    <property type="project" value="TreeGrafter"/>
</dbReference>
<dbReference type="GO" id="GO:0097487">
    <property type="term" value="C:multivesicular body, internal vesicle"/>
    <property type="evidence" value="ECO:0000250"/>
    <property type="project" value="UniProtKB"/>
</dbReference>
<dbReference type="GO" id="GO:0034361">
    <property type="term" value="C:very-low-density lipoprotein particle"/>
    <property type="evidence" value="ECO:0007669"/>
    <property type="project" value="UniProtKB-KW"/>
</dbReference>
<dbReference type="GO" id="GO:0120020">
    <property type="term" value="F:cholesterol transfer activity"/>
    <property type="evidence" value="ECO:0007669"/>
    <property type="project" value="TreeGrafter"/>
</dbReference>
<dbReference type="GO" id="GO:0008201">
    <property type="term" value="F:heparin binding"/>
    <property type="evidence" value="ECO:0007669"/>
    <property type="project" value="UniProtKB-KW"/>
</dbReference>
<dbReference type="GO" id="GO:0060228">
    <property type="term" value="F:phosphatidylcholine-sterol O-acyltransferase activator activity"/>
    <property type="evidence" value="ECO:0007669"/>
    <property type="project" value="TreeGrafter"/>
</dbReference>
<dbReference type="GO" id="GO:0005543">
    <property type="term" value="F:phospholipid binding"/>
    <property type="evidence" value="ECO:0007669"/>
    <property type="project" value="TreeGrafter"/>
</dbReference>
<dbReference type="GO" id="GO:0055090">
    <property type="term" value="P:acylglycerol homeostasis"/>
    <property type="evidence" value="ECO:0007669"/>
    <property type="project" value="TreeGrafter"/>
</dbReference>
<dbReference type="GO" id="GO:0033344">
    <property type="term" value="P:cholesterol efflux"/>
    <property type="evidence" value="ECO:0007669"/>
    <property type="project" value="TreeGrafter"/>
</dbReference>
<dbReference type="GO" id="GO:0008203">
    <property type="term" value="P:cholesterol metabolic process"/>
    <property type="evidence" value="ECO:0007669"/>
    <property type="project" value="TreeGrafter"/>
</dbReference>
<dbReference type="GO" id="GO:0042157">
    <property type="term" value="P:lipoprotein metabolic process"/>
    <property type="evidence" value="ECO:0007669"/>
    <property type="project" value="InterPro"/>
</dbReference>
<dbReference type="GO" id="GO:0032438">
    <property type="term" value="P:melanosome organization"/>
    <property type="evidence" value="ECO:0000250"/>
    <property type="project" value="UniProtKB"/>
</dbReference>
<dbReference type="GO" id="GO:0033700">
    <property type="term" value="P:phospholipid efflux"/>
    <property type="evidence" value="ECO:0007669"/>
    <property type="project" value="TreeGrafter"/>
</dbReference>
<dbReference type="FunFam" id="1.20.120.20:FF:000002">
    <property type="entry name" value="Apolipoprotein E"/>
    <property type="match status" value="1"/>
</dbReference>
<dbReference type="FunFam" id="1.20.120.20:FF:000003">
    <property type="entry name" value="Apolipoprotein E"/>
    <property type="match status" value="1"/>
</dbReference>
<dbReference type="Gene3D" id="1.20.120.20">
    <property type="entry name" value="Apolipoprotein"/>
    <property type="match status" value="1"/>
</dbReference>
<dbReference type="Gene3D" id="1.20.5.1230">
    <property type="entry name" value="Apolipoprotein A-I"/>
    <property type="match status" value="1"/>
</dbReference>
<dbReference type="InterPro" id="IPR000074">
    <property type="entry name" value="ApoA_E"/>
</dbReference>
<dbReference type="InterPro" id="IPR050163">
    <property type="entry name" value="Apolipoprotein_A1/A4/E"/>
</dbReference>
<dbReference type="PANTHER" id="PTHR18976">
    <property type="entry name" value="APOLIPOPROTEIN"/>
    <property type="match status" value="1"/>
</dbReference>
<dbReference type="PANTHER" id="PTHR18976:SF2">
    <property type="entry name" value="APOLIPOPROTEIN E"/>
    <property type="match status" value="1"/>
</dbReference>
<dbReference type="Pfam" id="PF01442">
    <property type="entry name" value="Apolipoprotein"/>
    <property type="match status" value="1"/>
</dbReference>
<dbReference type="SUPFAM" id="SSF58113">
    <property type="entry name" value="Apolipoprotein A-I"/>
    <property type="match status" value="1"/>
</dbReference>
<protein>
    <recommendedName>
        <fullName>Apolipoprotein E</fullName>
        <shortName>Apo-E</shortName>
    </recommendedName>
</protein>
<name>APOE_PTEVA</name>